<evidence type="ECO:0000255" key="1">
    <source>
        <dbReference type="PROSITE-ProRule" id="PRU00164"/>
    </source>
</evidence>
<evidence type="ECO:0000256" key="2">
    <source>
        <dbReference type="SAM" id="MobiDB-lite"/>
    </source>
</evidence>
<evidence type="ECO:0000305" key="3"/>
<name>RANG_DICDI</name>
<protein>
    <recommendedName>
        <fullName>Ran-specific GTPase-activating protein homolog</fullName>
    </recommendedName>
    <alternativeName>
        <fullName>Ran-binding protein 1</fullName>
        <shortName>RanBP1</shortName>
    </alternativeName>
</protein>
<comment type="similarity">
    <text evidence="3">Belongs to the RANBP1 family.</text>
</comment>
<gene>
    <name type="primary">ranbp1</name>
    <name type="ORF">DDB_G0287391</name>
</gene>
<feature type="chain" id="PRO_0000330896" description="Ran-specific GTPase-activating protein homolog">
    <location>
        <begin position="1"/>
        <end position="194"/>
    </location>
</feature>
<feature type="domain" description="RanBD1" evidence="1">
    <location>
        <begin position="42"/>
        <end position="188"/>
    </location>
</feature>
<feature type="region of interest" description="Disordered" evidence="2">
    <location>
        <begin position="1"/>
        <end position="36"/>
    </location>
</feature>
<feature type="compositionally biased region" description="Basic and acidic residues" evidence="2">
    <location>
        <begin position="1"/>
        <end position="10"/>
    </location>
</feature>
<feature type="compositionally biased region" description="Basic and acidic residues" evidence="2">
    <location>
        <begin position="18"/>
        <end position="27"/>
    </location>
</feature>
<dbReference type="EMBL" id="AAFI02000100">
    <property type="protein sequence ID" value="EAL63763.1"/>
    <property type="molecule type" value="Genomic_DNA"/>
</dbReference>
<dbReference type="RefSeq" id="XP_637284.1">
    <property type="nucleotide sequence ID" value="XM_632192.1"/>
</dbReference>
<dbReference type="SMR" id="Q54KD9"/>
<dbReference type="FunCoup" id="Q54KD9">
    <property type="interactions" value="841"/>
</dbReference>
<dbReference type="STRING" id="44689.Q54KD9"/>
<dbReference type="PaxDb" id="44689-DDB0237919"/>
<dbReference type="EnsemblProtists" id="EAL63763">
    <property type="protein sequence ID" value="EAL63763"/>
    <property type="gene ID" value="DDB_G0287391"/>
</dbReference>
<dbReference type="GeneID" id="8626115"/>
<dbReference type="KEGG" id="ddi:DDB_G0287391"/>
<dbReference type="dictyBase" id="DDB_G0287391">
    <property type="gene designation" value="ranbp1"/>
</dbReference>
<dbReference type="VEuPathDB" id="AmoebaDB:DDB_G0287391"/>
<dbReference type="eggNOG" id="KOG0864">
    <property type="taxonomic scope" value="Eukaryota"/>
</dbReference>
<dbReference type="HOGENOM" id="CLU_067861_0_1_1"/>
<dbReference type="InParanoid" id="Q54KD9"/>
<dbReference type="OMA" id="NFKDSFM"/>
<dbReference type="PhylomeDB" id="Q54KD9"/>
<dbReference type="PRO" id="PR:Q54KD9"/>
<dbReference type="Proteomes" id="UP000002195">
    <property type="component" value="Chromosome 5"/>
</dbReference>
<dbReference type="GO" id="GO:0005737">
    <property type="term" value="C:cytoplasm"/>
    <property type="evidence" value="ECO:0000318"/>
    <property type="project" value="GO_Central"/>
</dbReference>
<dbReference type="GO" id="GO:0005811">
    <property type="term" value="C:lipid droplet"/>
    <property type="evidence" value="ECO:0007005"/>
    <property type="project" value="dictyBase"/>
</dbReference>
<dbReference type="GO" id="GO:0005643">
    <property type="term" value="C:nuclear pore"/>
    <property type="evidence" value="ECO:0000318"/>
    <property type="project" value="GO_Central"/>
</dbReference>
<dbReference type="GO" id="GO:0140220">
    <property type="term" value="C:pathogen-containing vacuole"/>
    <property type="evidence" value="ECO:0000314"/>
    <property type="project" value="dictyBase"/>
</dbReference>
<dbReference type="GO" id="GO:0045335">
    <property type="term" value="C:phagocytic vesicle"/>
    <property type="evidence" value="ECO:0007005"/>
    <property type="project" value="dictyBase"/>
</dbReference>
<dbReference type="GO" id="GO:0031267">
    <property type="term" value="F:small GTPase binding"/>
    <property type="evidence" value="ECO:0000250"/>
    <property type="project" value="dictyBase"/>
</dbReference>
<dbReference type="GO" id="GO:0006913">
    <property type="term" value="P:nucleocytoplasmic transport"/>
    <property type="evidence" value="ECO:0007669"/>
    <property type="project" value="InterPro"/>
</dbReference>
<dbReference type="CDD" id="cd13179">
    <property type="entry name" value="RanBD_RanBP1"/>
    <property type="match status" value="1"/>
</dbReference>
<dbReference type="FunFam" id="2.30.29.30:FF:000018">
    <property type="entry name" value="E3 SUMO-protein ligase RanBP2"/>
    <property type="match status" value="1"/>
</dbReference>
<dbReference type="Gene3D" id="2.30.29.30">
    <property type="entry name" value="Pleckstrin-homology domain (PH domain)/Phosphotyrosine-binding domain (PTB)"/>
    <property type="match status" value="1"/>
</dbReference>
<dbReference type="InterPro" id="IPR011993">
    <property type="entry name" value="PH-like_dom_sf"/>
</dbReference>
<dbReference type="InterPro" id="IPR000156">
    <property type="entry name" value="Ran_bind_dom"/>
</dbReference>
<dbReference type="InterPro" id="IPR045255">
    <property type="entry name" value="RanBP1-like"/>
</dbReference>
<dbReference type="InterPro" id="IPR045256">
    <property type="entry name" value="RanBP1_RanBD"/>
</dbReference>
<dbReference type="InterPro" id="IPR000697">
    <property type="entry name" value="WH1/EVH1_dom"/>
</dbReference>
<dbReference type="PANTHER" id="PTHR23138:SF87">
    <property type="entry name" value="E3 SUMO-PROTEIN LIGASE RANBP2"/>
    <property type="match status" value="1"/>
</dbReference>
<dbReference type="PANTHER" id="PTHR23138">
    <property type="entry name" value="RAN BINDING PROTEIN"/>
    <property type="match status" value="1"/>
</dbReference>
<dbReference type="Pfam" id="PF00638">
    <property type="entry name" value="Ran_BP1"/>
    <property type="match status" value="1"/>
</dbReference>
<dbReference type="SMART" id="SM00160">
    <property type="entry name" value="RanBD"/>
    <property type="match status" value="1"/>
</dbReference>
<dbReference type="SUPFAM" id="SSF50729">
    <property type="entry name" value="PH domain-like"/>
    <property type="match status" value="1"/>
</dbReference>
<dbReference type="PROSITE" id="PS50196">
    <property type="entry name" value="RANBD1"/>
    <property type="match status" value="1"/>
</dbReference>
<dbReference type="PROSITE" id="PS50229">
    <property type="entry name" value="WH1"/>
    <property type="match status" value="1"/>
</dbReference>
<reference key="1">
    <citation type="journal article" date="2005" name="Nature">
        <title>The genome of the social amoeba Dictyostelium discoideum.</title>
        <authorList>
            <person name="Eichinger L."/>
            <person name="Pachebat J.A."/>
            <person name="Gloeckner G."/>
            <person name="Rajandream M.A."/>
            <person name="Sucgang R."/>
            <person name="Berriman M."/>
            <person name="Song J."/>
            <person name="Olsen R."/>
            <person name="Szafranski K."/>
            <person name="Xu Q."/>
            <person name="Tunggal B."/>
            <person name="Kummerfeld S."/>
            <person name="Madera M."/>
            <person name="Konfortov B.A."/>
            <person name="Rivero F."/>
            <person name="Bankier A.T."/>
            <person name="Lehmann R."/>
            <person name="Hamlin N."/>
            <person name="Davies R."/>
            <person name="Gaudet P."/>
            <person name="Fey P."/>
            <person name="Pilcher K."/>
            <person name="Chen G."/>
            <person name="Saunders D."/>
            <person name="Sodergren E.J."/>
            <person name="Davis P."/>
            <person name="Kerhornou A."/>
            <person name="Nie X."/>
            <person name="Hall N."/>
            <person name="Anjard C."/>
            <person name="Hemphill L."/>
            <person name="Bason N."/>
            <person name="Farbrother P."/>
            <person name="Desany B."/>
            <person name="Just E."/>
            <person name="Morio T."/>
            <person name="Rost R."/>
            <person name="Churcher C.M."/>
            <person name="Cooper J."/>
            <person name="Haydock S."/>
            <person name="van Driessche N."/>
            <person name="Cronin A."/>
            <person name="Goodhead I."/>
            <person name="Muzny D.M."/>
            <person name="Mourier T."/>
            <person name="Pain A."/>
            <person name="Lu M."/>
            <person name="Harper D."/>
            <person name="Lindsay R."/>
            <person name="Hauser H."/>
            <person name="James K.D."/>
            <person name="Quiles M."/>
            <person name="Madan Babu M."/>
            <person name="Saito T."/>
            <person name="Buchrieser C."/>
            <person name="Wardroper A."/>
            <person name="Felder M."/>
            <person name="Thangavelu M."/>
            <person name="Johnson D."/>
            <person name="Knights A."/>
            <person name="Loulseged H."/>
            <person name="Mungall K.L."/>
            <person name="Oliver K."/>
            <person name="Price C."/>
            <person name="Quail M.A."/>
            <person name="Urushihara H."/>
            <person name="Hernandez J."/>
            <person name="Rabbinowitsch E."/>
            <person name="Steffen D."/>
            <person name="Sanders M."/>
            <person name="Ma J."/>
            <person name="Kohara Y."/>
            <person name="Sharp S."/>
            <person name="Simmonds M.N."/>
            <person name="Spiegler S."/>
            <person name="Tivey A."/>
            <person name="Sugano S."/>
            <person name="White B."/>
            <person name="Walker D."/>
            <person name="Woodward J.R."/>
            <person name="Winckler T."/>
            <person name="Tanaka Y."/>
            <person name="Shaulsky G."/>
            <person name="Schleicher M."/>
            <person name="Weinstock G.M."/>
            <person name="Rosenthal A."/>
            <person name="Cox E.C."/>
            <person name="Chisholm R.L."/>
            <person name="Gibbs R.A."/>
            <person name="Loomis W.F."/>
            <person name="Platzer M."/>
            <person name="Kay R.R."/>
            <person name="Williams J.G."/>
            <person name="Dear P.H."/>
            <person name="Noegel A.A."/>
            <person name="Barrell B.G."/>
            <person name="Kuspa A."/>
        </authorList>
    </citation>
    <scope>NUCLEOTIDE SEQUENCE [LARGE SCALE GENOMIC DNA]</scope>
    <source>
        <strain>AX4</strain>
    </source>
</reference>
<reference key="2">
    <citation type="journal article" date="2006" name="Mol. Cell. Proteomics">
        <title>Proteomics fingerprinting of phagosome maturation and evidence for the role of a Galpha during uptake.</title>
        <authorList>
            <person name="Gotthardt D."/>
            <person name="Blancheteau V."/>
            <person name="Bosserhoff A."/>
            <person name="Ruppert T."/>
            <person name="Delorenzi M."/>
            <person name="Soldati T."/>
        </authorList>
    </citation>
    <scope>IDENTIFICATION BY MASS SPECTROMETRY [LARGE SCALE ANALYSIS]</scope>
    <source>
        <strain>AX2</strain>
    </source>
</reference>
<keyword id="KW-1185">Reference proteome</keyword>
<accession>Q54KD9</accession>
<organism>
    <name type="scientific">Dictyostelium discoideum</name>
    <name type="common">Social amoeba</name>
    <dbReference type="NCBI Taxonomy" id="44689"/>
    <lineage>
        <taxon>Eukaryota</taxon>
        <taxon>Amoebozoa</taxon>
        <taxon>Evosea</taxon>
        <taxon>Eumycetozoa</taxon>
        <taxon>Dictyostelia</taxon>
        <taxon>Dictyosteliales</taxon>
        <taxon>Dictyosteliaceae</taxon>
        <taxon>Dictyostelium</taxon>
    </lineage>
</organism>
<proteinExistence type="evidence at protein level"/>
<sequence length="194" mass="22421">MSEVEKKEEETTTTTTVEKTEEKKEETSSFAPAAEIKEYAADVEPNVEYEATLKRDVVEVKTNEENEDTLFEIRAKLYRFDTDPSPQWKERGTGNVRFLEDKDSKRIRVVMRRDKTLKVCLNHHISPALSLGEMTGSDKSWVWKCPKDFSDEEKPEGVEELFAIRFATPENAGLFKTEFQKCQAKNEAIEKKTE</sequence>